<accession>A5FQT5</accession>
<proteinExistence type="inferred from homology"/>
<keyword id="KW-0028">Amino-acid biosynthesis</keyword>
<keyword id="KW-0963">Cytoplasm</keyword>
<keyword id="KW-0220">Diaminopimelate biosynthesis</keyword>
<keyword id="KW-0456">Lyase</keyword>
<keyword id="KW-0457">Lysine biosynthesis</keyword>
<keyword id="KW-0704">Schiff base</keyword>
<feature type="chain" id="PRO_1000080528" description="4-hydroxy-tetrahydrodipicolinate synthase">
    <location>
        <begin position="1"/>
        <end position="297"/>
    </location>
</feature>
<feature type="active site" description="Proton donor/acceptor" evidence="1">
    <location>
        <position position="135"/>
    </location>
</feature>
<feature type="active site" description="Schiff-base intermediate with substrate" evidence="1">
    <location>
        <position position="163"/>
    </location>
</feature>
<feature type="binding site" evidence="1">
    <location>
        <position position="47"/>
    </location>
    <ligand>
        <name>pyruvate</name>
        <dbReference type="ChEBI" id="CHEBI:15361"/>
    </ligand>
</feature>
<feature type="binding site" evidence="1">
    <location>
        <position position="205"/>
    </location>
    <ligand>
        <name>pyruvate</name>
        <dbReference type="ChEBI" id="CHEBI:15361"/>
    </ligand>
</feature>
<feature type="site" description="Part of a proton relay during catalysis" evidence="1">
    <location>
        <position position="46"/>
    </location>
</feature>
<feature type="site" description="Part of a proton relay during catalysis" evidence="1">
    <location>
        <position position="109"/>
    </location>
</feature>
<protein>
    <recommendedName>
        <fullName evidence="1">4-hydroxy-tetrahydrodipicolinate synthase</fullName>
        <shortName evidence="1">HTPA synthase</shortName>
        <ecNumber evidence="1">4.3.3.7</ecNumber>
    </recommendedName>
</protein>
<comment type="function">
    <text evidence="1">Catalyzes the condensation of (S)-aspartate-beta-semialdehyde [(S)-ASA] and pyruvate to 4-hydroxy-tetrahydrodipicolinate (HTPA).</text>
</comment>
<comment type="catalytic activity">
    <reaction evidence="1">
        <text>L-aspartate 4-semialdehyde + pyruvate = (2S,4S)-4-hydroxy-2,3,4,5-tetrahydrodipicolinate + H2O + H(+)</text>
        <dbReference type="Rhea" id="RHEA:34171"/>
        <dbReference type="ChEBI" id="CHEBI:15361"/>
        <dbReference type="ChEBI" id="CHEBI:15377"/>
        <dbReference type="ChEBI" id="CHEBI:15378"/>
        <dbReference type="ChEBI" id="CHEBI:67139"/>
        <dbReference type="ChEBI" id="CHEBI:537519"/>
        <dbReference type="EC" id="4.3.3.7"/>
    </reaction>
</comment>
<comment type="pathway">
    <text evidence="1">Amino-acid biosynthesis; L-lysine biosynthesis via DAP pathway; (S)-tetrahydrodipicolinate from L-aspartate: step 3/4.</text>
</comment>
<comment type="subunit">
    <text evidence="1">Homotetramer; dimer of dimers.</text>
</comment>
<comment type="subcellular location">
    <subcellularLocation>
        <location evidence="1">Cytoplasm</location>
    </subcellularLocation>
</comment>
<comment type="similarity">
    <text evidence="1">Belongs to the DapA family.</text>
</comment>
<comment type="caution">
    <text evidence="2">Was originally thought to be a dihydrodipicolinate synthase (DHDPS), catalyzing the condensation of (S)-aspartate-beta-semialdehyde [(S)-ASA] and pyruvate to dihydrodipicolinate (DHDP). However, it was shown in E.coli that the product of the enzymatic reaction is not dihydrodipicolinate but in fact (4S)-4-hydroxy-2,3,4,5-tetrahydro-(2S)-dipicolinic acid (HTPA), and that the consecutive dehydration reaction leading to DHDP is not spontaneous but catalyzed by DapB.</text>
</comment>
<organism>
    <name type="scientific">Dehalococcoides mccartyi (strain ATCC BAA-2100 / JCM 16839 / KCTC 5957 / BAV1)</name>
    <dbReference type="NCBI Taxonomy" id="216389"/>
    <lineage>
        <taxon>Bacteria</taxon>
        <taxon>Bacillati</taxon>
        <taxon>Chloroflexota</taxon>
        <taxon>Dehalococcoidia</taxon>
        <taxon>Dehalococcoidales</taxon>
        <taxon>Dehalococcoidaceae</taxon>
        <taxon>Dehalococcoides</taxon>
    </lineage>
</organism>
<gene>
    <name evidence="1" type="primary">dapA</name>
    <name type="ordered locus">DehaBAV1_0864</name>
</gene>
<evidence type="ECO:0000255" key="1">
    <source>
        <dbReference type="HAMAP-Rule" id="MF_00418"/>
    </source>
</evidence>
<evidence type="ECO:0000305" key="2"/>
<reference key="1">
    <citation type="submission" date="2007-05" db="EMBL/GenBank/DDBJ databases">
        <title>Complete sequence of Dehalococcoides sp. BAV1.</title>
        <authorList>
            <consortium name="US DOE Joint Genome Institute"/>
            <person name="Copeland A."/>
            <person name="Lucas S."/>
            <person name="Lapidus A."/>
            <person name="Barry K."/>
            <person name="Detter J.C."/>
            <person name="Glavina del Rio T."/>
            <person name="Hammon N."/>
            <person name="Israni S."/>
            <person name="Pitluck S."/>
            <person name="Lowry S."/>
            <person name="Clum A."/>
            <person name="Schmutz J."/>
            <person name="Larimer F."/>
            <person name="Land M."/>
            <person name="Hauser L."/>
            <person name="Kyrpides N."/>
            <person name="Kim E."/>
            <person name="Ritalahti K.M."/>
            <person name="Loeffler F."/>
            <person name="Richardson P."/>
        </authorList>
    </citation>
    <scope>NUCLEOTIDE SEQUENCE [LARGE SCALE GENOMIC DNA]</scope>
    <source>
        <strain>ATCC BAA-2100 / JCM 16839 / KCTC 5957 / BAV1</strain>
    </source>
</reference>
<sequence>MKELGRLITAMVTPFKKDGTVDYAQAQKLALGLLDSGSDGLVVVGTTGESPTVTWEEEHALFAAVKSAVGNRGKVIAGTGANSTQEALENTLKAEKIGVDACLLVVPYYNKPTQEGLYLHFKTIAEATKLPCILYNVPSRTITHMNPETVIRLSQIPNIVGIKEASGKLDDIAQIINNVRPDFTVWSGNDSDTLPMLAMGSYGVISVASHLVGNQIKDMITSFVSGNTEHAAAIHRHLTPLIRSLFVVSNPIPIKYALNYLGVEVGGLRLPMTEADEKTAALIRESLKGYTIDLPIK</sequence>
<dbReference type="EC" id="4.3.3.7" evidence="1"/>
<dbReference type="EMBL" id="CP000688">
    <property type="protein sequence ID" value="ABQ17446.1"/>
    <property type="molecule type" value="Genomic_DNA"/>
</dbReference>
<dbReference type="SMR" id="A5FQT5"/>
<dbReference type="KEGG" id="deb:DehaBAV1_0864"/>
<dbReference type="PATRIC" id="fig|216389.18.peg.914"/>
<dbReference type="HOGENOM" id="CLU_049343_7_1_0"/>
<dbReference type="UniPathway" id="UPA00034">
    <property type="reaction ID" value="UER00017"/>
</dbReference>
<dbReference type="GO" id="GO:0005829">
    <property type="term" value="C:cytosol"/>
    <property type="evidence" value="ECO:0007669"/>
    <property type="project" value="TreeGrafter"/>
</dbReference>
<dbReference type="GO" id="GO:0008840">
    <property type="term" value="F:4-hydroxy-tetrahydrodipicolinate synthase activity"/>
    <property type="evidence" value="ECO:0007669"/>
    <property type="project" value="UniProtKB-UniRule"/>
</dbReference>
<dbReference type="GO" id="GO:0019877">
    <property type="term" value="P:diaminopimelate biosynthetic process"/>
    <property type="evidence" value="ECO:0007669"/>
    <property type="project" value="UniProtKB-UniRule"/>
</dbReference>
<dbReference type="GO" id="GO:0009089">
    <property type="term" value="P:lysine biosynthetic process via diaminopimelate"/>
    <property type="evidence" value="ECO:0007669"/>
    <property type="project" value="UniProtKB-UniRule"/>
</dbReference>
<dbReference type="CDD" id="cd00950">
    <property type="entry name" value="DHDPS"/>
    <property type="match status" value="1"/>
</dbReference>
<dbReference type="Gene3D" id="3.20.20.70">
    <property type="entry name" value="Aldolase class I"/>
    <property type="match status" value="1"/>
</dbReference>
<dbReference type="HAMAP" id="MF_00418">
    <property type="entry name" value="DapA"/>
    <property type="match status" value="1"/>
</dbReference>
<dbReference type="InterPro" id="IPR013785">
    <property type="entry name" value="Aldolase_TIM"/>
</dbReference>
<dbReference type="InterPro" id="IPR005263">
    <property type="entry name" value="DapA"/>
</dbReference>
<dbReference type="InterPro" id="IPR002220">
    <property type="entry name" value="DapA-like"/>
</dbReference>
<dbReference type="InterPro" id="IPR020625">
    <property type="entry name" value="Schiff_base-form_aldolases_AS"/>
</dbReference>
<dbReference type="InterPro" id="IPR020624">
    <property type="entry name" value="Schiff_base-form_aldolases_CS"/>
</dbReference>
<dbReference type="NCBIfam" id="TIGR00674">
    <property type="entry name" value="dapA"/>
    <property type="match status" value="1"/>
</dbReference>
<dbReference type="PANTHER" id="PTHR12128:SF66">
    <property type="entry name" value="4-HYDROXY-2-OXOGLUTARATE ALDOLASE, MITOCHONDRIAL"/>
    <property type="match status" value="1"/>
</dbReference>
<dbReference type="PANTHER" id="PTHR12128">
    <property type="entry name" value="DIHYDRODIPICOLINATE SYNTHASE"/>
    <property type="match status" value="1"/>
</dbReference>
<dbReference type="Pfam" id="PF00701">
    <property type="entry name" value="DHDPS"/>
    <property type="match status" value="1"/>
</dbReference>
<dbReference type="PIRSF" id="PIRSF001365">
    <property type="entry name" value="DHDPS"/>
    <property type="match status" value="1"/>
</dbReference>
<dbReference type="PRINTS" id="PR00146">
    <property type="entry name" value="DHPICSNTHASE"/>
</dbReference>
<dbReference type="SMART" id="SM01130">
    <property type="entry name" value="DHDPS"/>
    <property type="match status" value="1"/>
</dbReference>
<dbReference type="SUPFAM" id="SSF51569">
    <property type="entry name" value="Aldolase"/>
    <property type="match status" value="1"/>
</dbReference>
<dbReference type="PROSITE" id="PS00665">
    <property type="entry name" value="DHDPS_1"/>
    <property type="match status" value="1"/>
</dbReference>
<dbReference type="PROSITE" id="PS00666">
    <property type="entry name" value="DHDPS_2"/>
    <property type="match status" value="1"/>
</dbReference>
<name>DAPA_DEHMB</name>